<gene>
    <name evidence="1" type="primary">trpB</name>
    <name type="ordered locus">CGSHiEE_04740</name>
</gene>
<name>TRPB_HAEIE</name>
<sequence>MSDTLLNPYFGEFGGMYVPEILVPVLKQLEQAFVEAQNDPTFQAEFADLLKNYAGRPTALTLCRNLTKGTKTKLYLKREDLLHGGAHKTNQVLGQILLAKRMGKTRIIAETGAGQHGVATALACAMLDMPCRVYMGAKDVERQSPNVFRMRLMGAEVIPVQKGSCSLKDACCEAMRDWSANYETTHYLLGTAAGPHPFPTIVKEFQKMIGEETKRQILEREGRLPDAVIAAVGGGSNAIGMFADFIDESNVRLIGVEPAGKGIETGEHGAPLKHGTTGIYFGMKSPIMQDKDGQIEESYSISAGLDFPSVGPQHAYLNEIGRADYVSITDEEALNAFQELAKHEGIIPALESSHALAYALKLIKQNPEKEQLLVVNLSGRGDKDIFTVDKILNGGTN</sequence>
<accession>A5UC40</accession>
<evidence type="ECO:0000255" key="1">
    <source>
        <dbReference type="HAMAP-Rule" id="MF_00133"/>
    </source>
</evidence>
<dbReference type="EC" id="4.2.1.20" evidence="1"/>
<dbReference type="EMBL" id="CP000671">
    <property type="protein sequence ID" value="ABQ98341.1"/>
    <property type="molecule type" value="Genomic_DNA"/>
</dbReference>
<dbReference type="SMR" id="A5UC40"/>
<dbReference type="KEGG" id="hip:CGSHiEE_04740"/>
<dbReference type="HOGENOM" id="CLU_016734_3_1_6"/>
<dbReference type="UniPathway" id="UPA00035">
    <property type="reaction ID" value="UER00044"/>
</dbReference>
<dbReference type="GO" id="GO:0005737">
    <property type="term" value="C:cytoplasm"/>
    <property type="evidence" value="ECO:0007669"/>
    <property type="project" value="TreeGrafter"/>
</dbReference>
<dbReference type="GO" id="GO:0004834">
    <property type="term" value="F:tryptophan synthase activity"/>
    <property type="evidence" value="ECO:0007669"/>
    <property type="project" value="UniProtKB-UniRule"/>
</dbReference>
<dbReference type="CDD" id="cd06446">
    <property type="entry name" value="Trp-synth_B"/>
    <property type="match status" value="1"/>
</dbReference>
<dbReference type="FunFam" id="3.40.50.1100:FF:000001">
    <property type="entry name" value="Tryptophan synthase beta chain"/>
    <property type="match status" value="1"/>
</dbReference>
<dbReference type="FunFam" id="3.40.50.1100:FF:000004">
    <property type="entry name" value="Tryptophan synthase beta chain"/>
    <property type="match status" value="1"/>
</dbReference>
<dbReference type="Gene3D" id="3.40.50.1100">
    <property type="match status" value="2"/>
</dbReference>
<dbReference type="HAMAP" id="MF_00133">
    <property type="entry name" value="Trp_synth_beta"/>
    <property type="match status" value="1"/>
</dbReference>
<dbReference type="InterPro" id="IPR006653">
    <property type="entry name" value="Trp_synth_b_CS"/>
</dbReference>
<dbReference type="InterPro" id="IPR006654">
    <property type="entry name" value="Trp_synth_beta"/>
</dbReference>
<dbReference type="InterPro" id="IPR023026">
    <property type="entry name" value="Trp_synth_beta/beta-like"/>
</dbReference>
<dbReference type="InterPro" id="IPR001926">
    <property type="entry name" value="TrpB-like_PALP"/>
</dbReference>
<dbReference type="InterPro" id="IPR036052">
    <property type="entry name" value="TrpB-like_PALP_sf"/>
</dbReference>
<dbReference type="NCBIfam" id="TIGR00263">
    <property type="entry name" value="trpB"/>
    <property type="match status" value="1"/>
</dbReference>
<dbReference type="PANTHER" id="PTHR48077:SF3">
    <property type="entry name" value="TRYPTOPHAN SYNTHASE"/>
    <property type="match status" value="1"/>
</dbReference>
<dbReference type="PANTHER" id="PTHR48077">
    <property type="entry name" value="TRYPTOPHAN SYNTHASE-RELATED"/>
    <property type="match status" value="1"/>
</dbReference>
<dbReference type="Pfam" id="PF00291">
    <property type="entry name" value="PALP"/>
    <property type="match status" value="1"/>
</dbReference>
<dbReference type="PIRSF" id="PIRSF001413">
    <property type="entry name" value="Trp_syn_beta"/>
    <property type="match status" value="1"/>
</dbReference>
<dbReference type="SUPFAM" id="SSF53686">
    <property type="entry name" value="Tryptophan synthase beta subunit-like PLP-dependent enzymes"/>
    <property type="match status" value="1"/>
</dbReference>
<dbReference type="PROSITE" id="PS00168">
    <property type="entry name" value="TRP_SYNTHASE_BETA"/>
    <property type="match status" value="1"/>
</dbReference>
<organism>
    <name type="scientific">Haemophilus influenzae (strain PittEE)</name>
    <dbReference type="NCBI Taxonomy" id="374930"/>
    <lineage>
        <taxon>Bacteria</taxon>
        <taxon>Pseudomonadati</taxon>
        <taxon>Pseudomonadota</taxon>
        <taxon>Gammaproteobacteria</taxon>
        <taxon>Pasteurellales</taxon>
        <taxon>Pasteurellaceae</taxon>
        <taxon>Haemophilus</taxon>
    </lineage>
</organism>
<protein>
    <recommendedName>
        <fullName evidence="1">Tryptophan synthase beta chain</fullName>
        <ecNumber evidence="1">4.2.1.20</ecNumber>
    </recommendedName>
</protein>
<comment type="function">
    <text evidence="1">The beta subunit is responsible for the synthesis of L-tryptophan from indole and L-serine.</text>
</comment>
<comment type="catalytic activity">
    <reaction evidence="1">
        <text>(1S,2R)-1-C-(indol-3-yl)glycerol 3-phosphate + L-serine = D-glyceraldehyde 3-phosphate + L-tryptophan + H2O</text>
        <dbReference type="Rhea" id="RHEA:10532"/>
        <dbReference type="ChEBI" id="CHEBI:15377"/>
        <dbReference type="ChEBI" id="CHEBI:33384"/>
        <dbReference type="ChEBI" id="CHEBI:57912"/>
        <dbReference type="ChEBI" id="CHEBI:58866"/>
        <dbReference type="ChEBI" id="CHEBI:59776"/>
        <dbReference type="EC" id="4.2.1.20"/>
    </reaction>
</comment>
<comment type="cofactor">
    <cofactor evidence="1">
        <name>pyridoxal 5'-phosphate</name>
        <dbReference type="ChEBI" id="CHEBI:597326"/>
    </cofactor>
</comment>
<comment type="pathway">
    <text evidence="1">Amino-acid biosynthesis; L-tryptophan biosynthesis; L-tryptophan from chorismate: step 5/5.</text>
</comment>
<comment type="subunit">
    <text evidence="1">Tetramer of two alpha and two beta chains.</text>
</comment>
<comment type="similarity">
    <text evidence="1">Belongs to the TrpB family.</text>
</comment>
<proteinExistence type="inferred from homology"/>
<feature type="chain" id="PRO_1000076389" description="Tryptophan synthase beta chain">
    <location>
        <begin position="1"/>
        <end position="397"/>
    </location>
</feature>
<feature type="modified residue" description="N6-(pyridoxal phosphate)lysine" evidence="1">
    <location>
        <position position="88"/>
    </location>
</feature>
<keyword id="KW-0028">Amino-acid biosynthesis</keyword>
<keyword id="KW-0057">Aromatic amino acid biosynthesis</keyword>
<keyword id="KW-0456">Lyase</keyword>
<keyword id="KW-0663">Pyridoxal phosphate</keyword>
<keyword id="KW-0822">Tryptophan biosynthesis</keyword>
<reference key="1">
    <citation type="journal article" date="2007" name="Genome Biol.">
        <title>Characterization and modeling of the Haemophilus influenzae core and supragenomes based on the complete genomic sequences of Rd and 12 clinical nontypeable strains.</title>
        <authorList>
            <person name="Hogg J.S."/>
            <person name="Hu F.Z."/>
            <person name="Janto B."/>
            <person name="Boissy R."/>
            <person name="Hayes J."/>
            <person name="Keefe R."/>
            <person name="Post J.C."/>
            <person name="Ehrlich G.D."/>
        </authorList>
    </citation>
    <scope>NUCLEOTIDE SEQUENCE [LARGE SCALE GENOMIC DNA]</scope>
    <source>
        <strain>PittEE</strain>
    </source>
</reference>